<comment type="function">
    <text evidence="1">Component of the large ribosomal subunit. Plays a role in the formation of actively translating ribosomes. May play a role in the embryonic brain development.</text>
</comment>
<comment type="subunit">
    <text evidence="1">Component of the large ribosomal subunit. Mature ribosomes consist of a small (40S) and a large (60S) subunit. The 40S subunit contains about 33 different proteins and 1 molecule of RNA (18S). The 60S subunit contains about 49 different proteins and 3 molecules of RNA (28S, 5.8S and 5S).</text>
</comment>
<comment type="subcellular location">
    <subcellularLocation>
        <location evidence="2">Cytoplasm</location>
    </subcellularLocation>
</comment>
<comment type="PTM">
    <text evidence="2">Citrullinated by PADI4.</text>
</comment>
<comment type="PTM">
    <text evidence="2">Ufmylated by UFL1.</text>
</comment>
<comment type="similarity">
    <text evidence="4">Belongs to the universal ribosomal protein uL16 family.</text>
</comment>
<feature type="initiator methionine" description="Removed" evidence="3">
    <location>
        <position position="1"/>
    </location>
</feature>
<feature type="chain" id="PRO_0000147110" description="Large ribosomal subunit protein uL16">
    <location>
        <begin position="2"/>
        <end position="214"/>
    </location>
</feature>
<feature type="modified residue" description="Citrulline" evidence="2">
    <location>
        <position position="32"/>
    </location>
</feature>
<feature type="cross-link" description="Glycyl lysine isopeptide (Lys-Gly) (interchain with G-Cter in SUMO2)" evidence="1">
    <location>
        <position position="175"/>
    </location>
</feature>
<feature type="cross-link" description="Glycyl lysine isopeptide (Lys-Gly) (interchain with G-Cter in ubiquitin)" evidence="1">
    <location>
        <position position="188"/>
    </location>
</feature>
<name>RL10_RAT</name>
<accession>Q6PDV7</accession>
<accession>P45634</accession>
<proteinExistence type="evidence at protein level"/>
<sequence length="214" mass="24604">MGRRPARCYRYCKNKPYPKSRFCRGVPDAKIRIFDLGRKKAKVDEFPLCGHMVSDEYEQLSSEALEAARICANKYMVKSCGKDGFHIRVRLHPFHVIRINKMLSCAGADRLQTGMRGAFGKPQGTVARVHIGQVIMSIRTKLQNKEHVIEALRRAKFKFPGRQKIHISKKWGFTKFNADEFEDMVAEKRLIPDGCGVKYIPNRGPLDKWRALHS</sequence>
<protein>
    <recommendedName>
        <fullName evidence="4">Large ribosomal subunit protein uL16</fullName>
    </recommendedName>
    <alternativeName>
        <fullName evidence="4">60S ribosomal protein L10</fullName>
    </alternativeName>
    <alternativeName>
        <fullName evidence="5">Ribosomal protein L10</fullName>
    </alternativeName>
</protein>
<dbReference type="EMBL" id="X87106">
    <property type="protein sequence ID" value="CAA60587.1"/>
    <property type="molecule type" value="mRNA"/>
</dbReference>
<dbReference type="EMBL" id="BC058467">
    <property type="protein sequence ID" value="AAH58467.1"/>
    <property type="molecule type" value="mRNA"/>
</dbReference>
<dbReference type="PIR" id="JC4911">
    <property type="entry name" value="JC4911"/>
</dbReference>
<dbReference type="RefSeq" id="NP_112362.1">
    <property type="nucleotide sequence ID" value="NM_031100.3"/>
</dbReference>
<dbReference type="PDB" id="7QGG">
    <property type="method" value="EM"/>
    <property type="resolution" value="2.86 A"/>
    <property type="chains" value="K=1-214"/>
</dbReference>
<dbReference type="PDBsum" id="7QGG"/>
<dbReference type="EMDB" id="EMD-13954"/>
<dbReference type="SMR" id="Q6PDV7"/>
<dbReference type="BioGRID" id="249636">
    <property type="interactions" value="1"/>
</dbReference>
<dbReference type="FunCoup" id="Q6PDV7">
    <property type="interactions" value="2041"/>
</dbReference>
<dbReference type="IntAct" id="Q6PDV7">
    <property type="interactions" value="2"/>
</dbReference>
<dbReference type="STRING" id="10116.ENSRNOP00000070105"/>
<dbReference type="iPTMnet" id="Q6PDV7"/>
<dbReference type="PhosphoSitePlus" id="Q6PDV7"/>
<dbReference type="jPOST" id="Q6PDV7"/>
<dbReference type="PaxDb" id="10116-ENSRNOP00000053123"/>
<dbReference type="Ensembl" id="ENSRNOT00000083951.2">
    <property type="protein sequence ID" value="ENSRNOP00000070105.1"/>
    <property type="gene ID" value="ENSRNOG00000056765.2"/>
</dbReference>
<dbReference type="GeneID" id="81764"/>
<dbReference type="KEGG" id="rno:81764"/>
<dbReference type="AGR" id="RGD:621178"/>
<dbReference type="CTD" id="6134"/>
<dbReference type="RGD" id="621178">
    <property type="gene designation" value="Rpl10"/>
</dbReference>
<dbReference type="eggNOG" id="KOG0857">
    <property type="taxonomic scope" value="Eukaryota"/>
</dbReference>
<dbReference type="GeneTree" id="ENSGT00390000003897"/>
<dbReference type="HOGENOM" id="CLU_084051_0_0_1"/>
<dbReference type="InParanoid" id="Q6PDV7"/>
<dbReference type="OMA" id="HHVIREN"/>
<dbReference type="OrthoDB" id="9543396at2759"/>
<dbReference type="PhylomeDB" id="Q6PDV7"/>
<dbReference type="TreeFam" id="TF300082"/>
<dbReference type="Reactome" id="R-RNO-156827">
    <property type="pathway name" value="L13a-mediated translational silencing of Ceruloplasmin expression"/>
</dbReference>
<dbReference type="Reactome" id="R-RNO-1799339">
    <property type="pathway name" value="SRP-dependent cotranslational protein targeting to membrane"/>
</dbReference>
<dbReference type="Reactome" id="R-RNO-6791226">
    <property type="pathway name" value="Major pathway of rRNA processing in the nucleolus and cytosol"/>
</dbReference>
<dbReference type="Reactome" id="R-RNO-72689">
    <property type="pathway name" value="Formation of a pool of free 40S subunits"/>
</dbReference>
<dbReference type="Reactome" id="R-RNO-72706">
    <property type="pathway name" value="GTP hydrolysis and joining of the 60S ribosomal subunit"/>
</dbReference>
<dbReference type="Reactome" id="R-RNO-975956">
    <property type="pathway name" value="Nonsense Mediated Decay (NMD) independent of the Exon Junction Complex (EJC)"/>
</dbReference>
<dbReference type="Reactome" id="R-RNO-975957">
    <property type="pathway name" value="Nonsense Mediated Decay (NMD) enhanced by the Exon Junction Complex (EJC)"/>
</dbReference>
<dbReference type="PRO" id="PR:Q6PDV7"/>
<dbReference type="Proteomes" id="UP000002494">
    <property type="component" value="Chromosome X"/>
</dbReference>
<dbReference type="Bgee" id="ENSRNOG00000056765">
    <property type="expression patterns" value="Expressed in ovary and 20 other cell types or tissues"/>
</dbReference>
<dbReference type="GO" id="GO:0005737">
    <property type="term" value="C:cytoplasm"/>
    <property type="evidence" value="ECO:0000266"/>
    <property type="project" value="RGD"/>
</dbReference>
<dbReference type="GO" id="GO:0098556">
    <property type="term" value="C:cytoplasmic side of rough endoplasmic reticulum membrane"/>
    <property type="evidence" value="ECO:0000266"/>
    <property type="project" value="RGD"/>
</dbReference>
<dbReference type="GO" id="GO:0022625">
    <property type="term" value="C:cytosolic large ribosomal subunit"/>
    <property type="evidence" value="ECO:0000314"/>
    <property type="project" value="RGD"/>
</dbReference>
<dbReference type="GO" id="GO:0022626">
    <property type="term" value="C:cytosolic ribosome"/>
    <property type="evidence" value="ECO:0000266"/>
    <property type="project" value="RGD"/>
</dbReference>
<dbReference type="GO" id="GO:0015934">
    <property type="term" value="C:large ribosomal subunit"/>
    <property type="evidence" value="ECO:0000266"/>
    <property type="project" value="RGD"/>
</dbReference>
<dbReference type="GO" id="GO:0005634">
    <property type="term" value="C:nucleus"/>
    <property type="evidence" value="ECO:0000266"/>
    <property type="project" value="RGD"/>
</dbReference>
<dbReference type="GO" id="GO:0032991">
    <property type="term" value="C:protein-containing complex"/>
    <property type="evidence" value="ECO:0000266"/>
    <property type="project" value="RGD"/>
</dbReference>
<dbReference type="GO" id="GO:0005790">
    <property type="term" value="C:smooth endoplasmic reticulum"/>
    <property type="evidence" value="ECO:0000266"/>
    <property type="project" value="RGD"/>
</dbReference>
<dbReference type="GO" id="GO:0045202">
    <property type="term" value="C:synapse"/>
    <property type="evidence" value="ECO:0000266"/>
    <property type="project" value="RGD"/>
</dbReference>
<dbReference type="GO" id="GO:0003735">
    <property type="term" value="F:structural constituent of ribosome"/>
    <property type="evidence" value="ECO:0000250"/>
    <property type="project" value="UniProtKB"/>
</dbReference>
<dbReference type="GO" id="GO:0045182">
    <property type="term" value="F:translation regulator activity"/>
    <property type="evidence" value="ECO:0000250"/>
    <property type="project" value="UniProtKB"/>
</dbReference>
<dbReference type="GO" id="GO:1990403">
    <property type="term" value="P:embryonic brain development"/>
    <property type="evidence" value="ECO:0000250"/>
    <property type="project" value="UniProtKB"/>
</dbReference>
<dbReference type="GO" id="GO:0097421">
    <property type="term" value="P:liver regeneration"/>
    <property type="evidence" value="ECO:0000270"/>
    <property type="project" value="RGD"/>
</dbReference>
<dbReference type="GO" id="GO:0043066">
    <property type="term" value="P:negative regulation of apoptotic process"/>
    <property type="evidence" value="ECO:0000266"/>
    <property type="project" value="RGD"/>
</dbReference>
<dbReference type="GO" id="GO:0000122">
    <property type="term" value="P:negative regulation of transcription by RNA polymerase II"/>
    <property type="evidence" value="ECO:0000266"/>
    <property type="project" value="RGD"/>
</dbReference>
<dbReference type="GO" id="GO:0006417">
    <property type="term" value="P:regulation of translation"/>
    <property type="evidence" value="ECO:0000250"/>
    <property type="project" value="UniProtKB"/>
</dbReference>
<dbReference type="GO" id="GO:0006412">
    <property type="term" value="P:translation"/>
    <property type="evidence" value="ECO:0000318"/>
    <property type="project" value="GO_Central"/>
</dbReference>
<dbReference type="CDD" id="cd01433">
    <property type="entry name" value="Ribosomal_L16_L10e"/>
    <property type="match status" value="1"/>
</dbReference>
<dbReference type="FunFam" id="3.30.60.300:FF:000001">
    <property type="entry name" value="60S ribosomal protein L10"/>
    <property type="match status" value="1"/>
</dbReference>
<dbReference type="FunFam" id="3.90.1170.10:FF:000002">
    <property type="entry name" value="60S ribosomal protein L10"/>
    <property type="match status" value="1"/>
</dbReference>
<dbReference type="Gene3D" id="3.30.60.300">
    <property type="match status" value="1"/>
</dbReference>
<dbReference type="Gene3D" id="3.90.1170.10">
    <property type="entry name" value="Ribosomal protein L10e/L16"/>
    <property type="match status" value="1"/>
</dbReference>
<dbReference type="InterPro" id="IPR047873">
    <property type="entry name" value="Ribosomal_uL16"/>
</dbReference>
<dbReference type="InterPro" id="IPR018255">
    <property type="entry name" value="Ribosomal_uL16_CS_euk_arc"/>
</dbReference>
<dbReference type="InterPro" id="IPR016180">
    <property type="entry name" value="Ribosomal_uL16_dom"/>
</dbReference>
<dbReference type="InterPro" id="IPR001197">
    <property type="entry name" value="Ribosomal_uL16_euk_arch"/>
</dbReference>
<dbReference type="InterPro" id="IPR036920">
    <property type="entry name" value="Ribosomal_uL16_sf"/>
</dbReference>
<dbReference type="NCBIfam" id="NF003239">
    <property type="entry name" value="PRK04199.1-4"/>
    <property type="match status" value="1"/>
</dbReference>
<dbReference type="NCBIfam" id="TIGR00279">
    <property type="entry name" value="uL16_euk_arch"/>
    <property type="match status" value="1"/>
</dbReference>
<dbReference type="PANTHER" id="PTHR11726">
    <property type="entry name" value="60S RIBOSOMAL PROTEIN L10"/>
    <property type="match status" value="1"/>
</dbReference>
<dbReference type="Pfam" id="PF00252">
    <property type="entry name" value="Ribosomal_L16"/>
    <property type="match status" value="1"/>
</dbReference>
<dbReference type="PIRSF" id="PIRSF005590">
    <property type="entry name" value="Ribosomal_L10"/>
    <property type="match status" value="1"/>
</dbReference>
<dbReference type="SUPFAM" id="SSF54686">
    <property type="entry name" value="Ribosomal protein L16p/L10e"/>
    <property type="match status" value="1"/>
</dbReference>
<dbReference type="PROSITE" id="PS01257">
    <property type="entry name" value="RIBOSOMAL_L10E"/>
    <property type="match status" value="1"/>
</dbReference>
<evidence type="ECO:0000250" key="1">
    <source>
        <dbReference type="UniProtKB" id="P27635"/>
    </source>
</evidence>
<evidence type="ECO:0000250" key="2">
    <source>
        <dbReference type="UniProtKB" id="Q6ZWV3"/>
    </source>
</evidence>
<evidence type="ECO:0000269" key="3">
    <source>
    </source>
</evidence>
<evidence type="ECO:0000305" key="4"/>
<evidence type="ECO:0000312" key="5">
    <source>
        <dbReference type="RGD" id="621178"/>
    </source>
</evidence>
<keyword id="KW-0002">3D-structure</keyword>
<keyword id="KW-0164">Citrullination</keyword>
<keyword id="KW-0963">Cytoplasm</keyword>
<keyword id="KW-0217">Developmental protein</keyword>
<keyword id="KW-0903">Direct protein sequencing</keyword>
<keyword id="KW-1017">Isopeptide bond</keyword>
<keyword id="KW-1185">Reference proteome</keyword>
<keyword id="KW-0687">Ribonucleoprotein</keyword>
<keyword id="KW-0689">Ribosomal protein</keyword>
<keyword id="KW-0832">Ubl conjugation</keyword>
<gene>
    <name evidence="5" type="primary">Rpl10</name>
</gene>
<organism>
    <name type="scientific">Rattus norvegicus</name>
    <name type="common">Rat</name>
    <dbReference type="NCBI Taxonomy" id="10116"/>
    <lineage>
        <taxon>Eukaryota</taxon>
        <taxon>Metazoa</taxon>
        <taxon>Chordata</taxon>
        <taxon>Craniata</taxon>
        <taxon>Vertebrata</taxon>
        <taxon>Euteleostomi</taxon>
        <taxon>Mammalia</taxon>
        <taxon>Eutheria</taxon>
        <taxon>Euarchontoglires</taxon>
        <taxon>Glires</taxon>
        <taxon>Rodentia</taxon>
        <taxon>Myomorpha</taxon>
        <taxon>Muroidea</taxon>
        <taxon>Muridae</taxon>
        <taxon>Murinae</taxon>
        <taxon>Rattus</taxon>
    </lineage>
</organism>
<reference key="1">
    <citation type="journal article" date="1996" name="Biochem. Biophys. Res. Commun.">
        <title>The primary structure of rat ribosomal protein L10: relationship to a Jun-binding protein and to a putative Wilms' tumor suppressor.</title>
        <authorList>
            <person name="Chan Y.-L."/>
            <person name="Diaz J.-J."/>
            <person name="Denoroy L."/>
            <person name="Madjar J.-J."/>
            <person name="Wool I.G."/>
        </authorList>
    </citation>
    <scope>NUCLEOTIDE SEQUENCE [MRNA]</scope>
    <scope>PROTEIN SEQUENCE OF 2-29</scope>
    <source>
        <strain>Sprague-Dawley</strain>
        <tissue>Liver</tissue>
    </source>
</reference>
<reference key="2">
    <citation type="journal article" date="2004" name="Genome Res.">
        <title>The status, quality, and expansion of the NIH full-length cDNA project: the Mammalian Gene Collection (MGC).</title>
        <authorList>
            <consortium name="The MGC Project Team"/>
        </authorList>
    </citation>
    <scope>NUCLEOTIDE SEQUENCE [LARGE SCALE MRNA]</scope>
    <source>
        <tissue>Pituitary</tissue>
    </source>
</reference>